<feature type="chain" id="PRO_0000283957" description="Non-structural protein of 12.7 kDa">
    <location>
        <begin position="1"/>
        <end position="107"/>
    </location>
</feature>
<organismHost>
    <name type="scientific">Rattus norvegicus</name>
    <name type="common">Rat</name>
    <dbReference type="NCBI Taxonomy" id="10116"/>
</organismHost>
<protein>
    <recommendedName>
        <fullName>Non-structural protein of 12.7 kDa</fullName>
        <shortName>ns12.7</shortName>
    </recommendedName>
    <alternativeName>
        <fullName>12.7 kDa accessory protein</fullName>
    </alternativeName>
</protein>
<sequence length="107" mass="12566">MEIWHVSDARLRRTRDFGVTRLEDFCFQFNYIQPRVGYCRVPLKAWCSNQGKFAAQFTLKSCEKSGQEKVITSFTAYDKTVKKAVSKLVEEAVDFIIWRATYLERNV</sequence>
<accession>Q9IKC9</accession>
<reference key="1">
    <citation type="journal article" date="2000" name="Clin. Diagn. Lab. Immunol.">
        <title>Primary structure of the sialodacryoadenitis virus genome: sequence of the structural-protein region and its application for differential diagnosis.</title>
        <authorList>
            <person name="Yoo D."/>
            <person name="Pei Y."/>
            <person name="Christie N."/>
            <person name="Cooper M."/>
        </authorList>
    </citation>
    <scope>NUCLEOTIDE SEQUENCE [GENOMIC RNA]</scope>
</reference>
<name>NS12_CVRSD</name>
<comment type="similarity">
    <text evidence="1">Belongs to the coronaviruses ns12.7 protein family.</text>
</comment>
<proteinExistence type="inferred from homology"/>
<dbReference type="EMBL" id="AF207551">
    <property type="protein sequence ID" value="AAF97740.1"/>
    <property type="molecule type" value="Genomic_RNA"/>
</dbReference>
<dbReference type="InterPro" id="IPR006841">
    <property type="entry name" value="Corona_NS2"/>
</dbReference>
<dbReference type="Pfam" id="PF04753">
    <property type="entry name" value="Corona_NS12-7"/>
    <property type="match status" value="1"/>
</dbReference>
<evidence type="ECO:0000305" key="1"/>
<organism>
    <name type="scientific">Rat coronavirus (strain 681)</name>
    <name type="common">RCV-SDAV</name>
    <name type="synonym">Sialodacryoadenitis virus SDAV-681</name>
    <dbReference type="NCBI Taxonomy" id="33740"/>
    <lineage>
        <taxon>Viruses</taxon>
        <taxon>Riboviria</taxon>
        <taxon>Orthornavirae</taxon>
        <taxon>Pisuviricota</taxon>
        <taxon>Pisoniviricetes</taxon>
        <taxon>Nidovirales</taxon>
        <taxon>Cornidovirineae</taxon>
        <taxon>Coronaviridae</taxon>
        <taxon>Orthocoronavirinae</taxon>
        <taxon>Betacoronavirus</taxon>
        <taxon>Embecovirus</taxon>
        <taxon>Murine coronavirus</taxon>
    </lineage>
</organism>